<proteinExistence type="inferred from homology"/>
<sequence length="270" mass="30969">MDWKKLQDLLSGVNQYSTAFGRIWLSVVFVFRVLVYVVAAERVWGDEQKDFDCNTRQPGCTNVCYDNFFPISNIRLWALQLIFVTCPSMLVILHVAYREERERKHRQKHGEHCAKLYSHPGKKHGGLWWTYLFSLIFKLIIELVFLYVLHTLWHGFTMPRLVQCASVVPCPNTVDCYIARPTEKKVFTYFMVGASAVCIILTICEICYLIFHRIMRGLSKDKSTKSISSPKSSSRASTCRCHHKLLESGDLEAVPADDKLQASAPSLTPI</sequence>
<organism>
    <name type="scientific">Rattus norvegicus</name>
    <name type="common">Rat</name>
    <dbReference type="NCBI Taxonomy" id="10116"/>
    <lineage>
        <taxon>Eukaryota</taxon>
        <taxon>Metazoa</taxon>
        <taxon>Chordata</taxon>
        <taxon>Craniata</taxon>
        <taxon>Vertebrata</taxon>
        <taxon>Euteleostomi</taxon>
        <taxon>Mammalia</taxon>
        <taxon>Eutheria</taxon>
        <taxon>Euarchontoglires</taxon>
        <taxon>Glires</taxon>
        <taxon>Rodentia</taxon>
        <taxon>Myomorpha</taxon>
        <taxon>Muroidea</taxon>
        <taxon>Muridae</taxon>
        <taxon>Murinae</taxon>
        <taxon>Rattus</taxon>
    </lineage>
</organism>
<protein>
    <recommendedName>
        <fullName>Gap junction beta-3 protein</fullName>
    </recommendedName>
    <alternativeName>
        <fullName>Connexin-31</fullName>
        <shortName>Cx31</shortName>
    </alternativeName>
</protein>
<dbReference type="EMBL" id="M59936">
    <property type="protein sequence ID" value="AAA40997.1"/>
    <property type="molecule type" value="Genomic_DNA"/>
</dbReference>
<dbReference type="PIR" id="A38737">
    <property type="entry name" value="A38737"/>
</dbReference>
<dbReference type="RefSeq" id="NP_001398589.1">
    <property type="nucleotide sequence ID" value="NM_001411660.1"/>
</dbReference>
<dbReference type="RefSeq" id="NP_062113.1">
    <property type="nucleotide sequence ID" value="NM_019240.2"/>
</dbReference>
<dbReference type="RefSeq" id="XP_006238907.1">
    <property type="nucleotide sequence ID" value="XM_006238845.3"/>
</dbReference>
<dbReference type="SMR" id="P25305"/>
<dbReference type="FunCoup" id="P25305">
    <property type="interactions" value="12"/>
</dbReference>
<dbReference type="STRING" id="10116.ENSRNOP00000019266"/>
<dbReference type="iPTMnet" id="P25305"/>
<dbReference type="PhosphoSitePlus" id="P25305"/>
<dbReference type="PaxDb" id="10116-ENSRNOP00000019266"/>
<dbReference type="Ensembl" id="ENSRNOT00000019266.3">
    <property type="protein sequence ID" value="ENSRNOP00000019266.1"/>
    <property type="gene ID" value="ENSRNOG00000014372.3"/>
</dbReference>
<dbReference type="Ensembl" id="ENSRNOT00000111000.1">
    <property type="protein sequence ID" value="ENSRNOP00000084913.1"/>
    <property type="gene ID" value="ENSRNOG00000014372.3"/>
</dbReference>
<dbReference type="GeneID" id="29585"/>
<dbReference type="KEGG" id="rno:29585"/>
<dbReference type="UCSC" id="RGD:2695">
    <property type="organism name" value="rat"/>
</dbReference>
<dbReference type="AGR" id="RGD:2695"/>
<dbReference type="CTD" id="2707"/>
<dbReference type="RGD" id="2695">
    <property type="gene designation" value="Gjb3"/>
</dbReference>
<dbReference type="eggNOG" id="ENOG502QRC0">
    <property type="taxonomic scope" value="Eukaryota"/>
</dbReference>
<dbReference type="GeneTree" id="ENSGT01030000234513"/>
<dbReference type="HOGENOM" id="CLU_037388_4_1_1"/>
<dbReference type="InParanoid" id="P25305"/>
<dbReference type="OMA" id="HFFPISN"/>
<dbReference type="OrthoDB" id="9441654at2759"/>
<dbReference type="PhylomeDB" id="P25305"/>
<dbReference type="TreeFam" id="TF329606"/>
<dbReference type="Reactome" id="R-RNO-190861">
    <property type="pathway name" value="Gap junction assembly"/>
</dbReference>
<dbReference type="PRO" id="PR:P25305"/>
<dbReference type="Proteomes" id="UP000002494">
    <property type="component" value="Chromosome 5"/>
</dbReference>
<dbReference type="Bgee" id="ENSRNOG00000014372">
    <property type="expression patterns" value="Expressed in jejunum and 11 other cell types or tissues"/>
</dbReference>
<dbReference type="GO" id="GO:0005911">
    <property type="term" value="C:cell-cell junction"/>
    <property type="evidence" value="ECO:0000266"/>
    <property type="project" value="RGD"/>
</dbReference>
<dbReference type="GO" id="GO:0005922">
    <property type="term" value="C:connexin complex"/>
    <property type="evidence" value="ECO:0000318"/>
    <property type="project" value="GO_Central"/>
</dbReference>
<dbReference type="GO" id="GO:0005737">
    <property type="term" value="C:cytoplasm"/>
    <property type="evidence" value="ECO:0000266"/>
    <property type="project" value="RGD"/>
</dbReference>
<dbReference type="GO" id="GO:0005921">
    <property type="term" value="C:gap junction"/>
    <property type="evidence" value="ECO:0000314"/>
    <property type="project" value="RGD"/>
</dbReference>
<dbReference type="GO" id="GO:0005243">
    <property type="term" value="F:gap junction channel activity"/>
    <property type="evidence" value="ECO:0000318"/>
    <property type="project" value="GO_Central"/>
</dbReference>
<dbReference type="GO" id="GO:0007267">
    <property type="term" value="P:cell-cell signaling"/>
    <property type="evidence" value="ECO:0000318"/>
    <property type="project" value="GO_Central"/>
</dbReference>
<dbReference type="GO" id="GO:0071300">
    <property type="term" value="P:cellular response to retinoic acid"/>
    <property type="evidence" value="ECO:0000270"/>
    <property type="project" value="RGD"/>
</dbReference>
<dbReference type="GO" id="GO:0001701">
    <property type="term" value="P:in utero embryonic development"/>
    <property type="evidence" value="ECO:0000270"/>
    <property type="project" value="RGD"/>
</dbReference>
<dbReference type="GO" id="GO:0001890">
    <property type="term" value="P:placenta development"/>
    <property type="evidence" value="ECO:0000266"/>
    <property type="project" value="RGD"/>
</dbReference>
<dbReference type="GO" id="GO:0043588">
    <property type="term" value="P:skin development"/>
    <property type="evidence" value="ECO:0000270"/>
    <property type="project" value="RGD"/>
</dbReference>
<dbReference type="GO" id="GO:0007283">
    <property type="term" value="P:spermatogenesis"/>
    <property type="evidence" value="ECO:0000270"/>
    <property type="project" value="RGD"/>
</dbReference>
<dbReference type="FunFam" id="1.20.1440.80:FF:000001">
    <property type="entry name" value="Gap junction alpha-1"/>
    <property type="match status" value="1"/>
</dbReference>
<dbReference type="Gene3D" id="1.20.1440.80">
    <property type="entry name" value="Gap junction channel protein cysteine-rich domain"/>
    <property type="match status" value="1"/>
</dbReference>
<dbReference type="InterPro" id="IPR000500">
    <property type="entry name" value="Connexin"/>
</dbReference>
<dbReference type="InterPro" id="IPR002269">
    <property type="entry name" value="Connexin31"/>
</dbReference>
<dbReference type="InterPro" id="IPR019570">
    <property type="entry name" value="Connexin_CCC"/>
</dbReference>
<dbReference type="InterPro" id="IPR017990">
    <property type="entry name" value="Connexin_CS"/>
</dbReference>
<dbReference type="InterPro" id="IPR013092">
    <property type="entry name" value="Connexin_N"/>
</dbReference>
<dbReference type="InterPro" id="IPR038359">
    <property type="entry name" value="Connexin_N_sf"/>
</dbReference>
<dbReference type="PANTHER" id="PTHR11984">
    <property type="entry name" value="CONNEXIN"/>
    <property type="match status" value="1"/>
</dbReference>
<dbReference type="PANTHER" id="PTHR11984:SF65">
    <property type="entry name" value="GAP JUNCTION BETA-3 PROTEIN"/>
    <property type="match status" value="1"/>
</dbReference>
<dbReference type="Pfam" id="PF00029">
    <property type="entry name" value="Connexin"/>
    <property type="match status" value="1"/>
</dbReference>
<dbReference type="PRINTS" id="PR00206">
    <property type="entry name" value="CONNEXIN"/>
</dbReference>
<dbReference type="PRINTS" id="PR01140">
    <property type="entry name" value="CONNEXINB3"/>
</dbReference>
<dbReference type="SMART" id="SM00037">
    <property type="entry name" value="CNX"/>
    <property type="match status" value="1"/>
</dbReference>
<dbReference type="SMART" id="SM01089">
    <property type="entry name" value="Connexin_CCC"/>
    <property type="match status" value="1"/>
</dbReference>
<dbReference type="PROSITE" id="PS00407">
    <property type="entry name" value="CONNEXINS_1"/>
    <property type="match status" value="1"/>
</dbReference>
<dbReference type="PROSITE" id="PS00408">
    <property type="entry name" value="CONNEXINS_2"/>
    <property type="match status" value="1"/>
</dbReference>
<feature type="chain" id="PRO_0000057864" description="Gap junction beta-3 protein">
    <location>
        <begin position="1"/>
        <end position="270"/>
    </location>
</feature>
<feature type="topological domain" description="Cytoplasmic" evidence="2">
    <location>
        <begin position="1"/>
        <end position="20"/>
    </location>
</feature>
<feature type="transmembrane region" description="Helical" evidence="2">
    <location>
        <begin position="21"/>
        <end position="40"/>
    </location>
</feature>
<feature type="topological domain" description="Extracellular" evidence="2">
    <location>
        <begin position="41"/>
        <end position="75"/>
    </location>
</feature>
<feature type="transmembrane region" description="Helical" evidence="2">
    <location>
        <begin position="76"/>
        <end position="98"/>
    </location>
</feature>
<feature type="topological domain" description="Cytoplasmic" evidence="2">
    <location>
        <begin position="99"/>
        <end position="126"/>
    </location>
</feature>
<feature type="transmembrane region" description="Helical" evidence="2">
    <location>
        <begin position="127"/>
        <end position="149"/>
    </location>
</feature>
<feature type="topological domain" description="Extracellular" evidence="2">
    <location>
        <begin position="150"/>
        <end position="188"/>
    </location>
</feature>
<feature type="transmembrane region" description="Helical" evidence="2">
    <location>
        <begin position="189"/>
        <end position="211"/>
    </location>
</feature>
<feature type="topological domain" description="Cytoplasmic" evidence="2">
    <location>
        <begin position="212"/>
        <end position="270"/>
    </location>
</feature>
<name>CXB3_RAT</name>
<keyword id="KW-0965">Cell junction</keyword>
<keyword id="KW-1003">Cell membrane</keyword>
<keyword id="KW-0303">Gap junction</keyword>
<keyword id="KW-0472">Membrane</keyword>
<keyword id="KW-1185">Reference proteome</keyword>
<keyword id="KW-0812">Transmembrane</keyword>
<keyword id="KW-1133">Transmembrane helix</keyword>
<accession>P25305</accession>
<evidence type="ECO:0000250" key="1"/>
<evidence type="ECO:0000255" key="2"/>
<evidence type="ECO:0000305" key="3"/>
<comment type="function">
    <text>One gap junction consists of a cluster of closely packed pairs of transmembrane channels, the connexons, through which materials of low MW diffuse from one cell to a neighboring cell.</text>
</comment>
<comment type="subunit">
    <text evidence="1">A connexon is composed of a hexamer of connexins. Interacts with CNST (By similarity).</text>
</comment>
<comment type="subcellular location">
    <subcellularLocation>
        <location>Cell membrane</location>
        <topology>Multi-pass membrane protein</topology>
    </subcellularLocation>
    <subcellularLocation>
        <location>Cell junction</location>
        <location>Gap junction</location>
    </subcellularLocation>
</comment>
<comment type="similarity">
    <text evidence="3">Belongs to the connexin family. Beta-type (group I) subfamily.</text>
</comment>
<reference key="1">
    <citation type="journal article" date="1991" name="J. Biol. Chem.">
        <title>Molecular cloning and characterization of a new member of the gap junction gene family, connexin-31.</title>
        <authorList>
            <person name="Hoh J.H."/>
            <person name="John S.A."/>
            <person name="Revel J.-P."/>
        </authorList>
    </citation>
    <scope>NUCLEOTIDE SEQUENCE [GENOMIC DNA]</scope>
</reference>
<gene>
    <name type="primary">Gjb3</name>
    <name type="synonym">Cxn-31</name>
</gene>